<proteinExistence type="inferred from homology"/>
<keyword id="KW-0963">Cytoplasm</keyword>
<keyword id="KW-0342">GTP-binding</keyword>
<keyword id="KW-0436">Ligase</keyword>
<keyword id="KW-0460">Magnesium</keyword>
<keyword id="KW-0479">Metal-binding</keyword>
<keyword id="KW-0547">Nucleotide-binding</keyword>
<keyword id="KW-0658">Purine biosynthesis</keyword>
<keyword id="KW-1185">Reference proteome</keyword>
<reference key="1">
    <citation type="journal article" date="2007" name="PLoS Pathog.">
        <title>Genome sequence of Babesia bovis and comparative analysis of apicomplexan hemoprotozoa.</title>
        <authorList>
            <person name="Brayton K.A."/>
            <person name="Lau A.O.T."/>
            <person name="Herndon D.R."/>
            <person name="Hannick L."/>
            <person name="Kappmeyer L.S."/>
            <person name="Berens S.J."/>
            <person name="Bidwell S.L."/>
            <person name="Brown W.C."/>
            <person name="Crabtree J."/>
            <person name="Fadrosh D."/>
            <person name="Feldblum T."/>
            <person name="Forberger H.A."/>
            <person name="Haas B.J."/>
            <person name="Howell J.M."/>
            <person name="Khouri H."/>
            <person name="Koo H."/>
            <person name="Mann D.J."/>
            <person name="Norimine J."/>
            <person name="Paulsen I.T."/>
            <person name="Radune D."/>
            <person name="Ren Q."/>
            <person name="Smith R.K. Jr."/>
            <person name="Suarez C.E."/>
            <person name="White O."/>
            <person name="Wortman J.R."/>
            <person name="Knowles D.P. Jr."/>
            <person name="McElwain T.F."/>
            <person name="Nene V.M."/>
        </authorList>
    </citation>
    <scope>NUCLEOTIDE SEQUENCE [LARGE SCALE GENOMIC DNA]</scope>
    <source>
        <strain>T2Bo</strain>
    </source>
</reference>
<dbReference type="EC" id="6.3.4.4" evidence="2"/>
<dbReference type="EMBL" id="AAXT02000003">
    <property type="protein sequence ID" value="EDO06449.1"/>
    <property type="molecule type" value="Genomic_DNA"/>
</dbReference>
<dbReference type="RefSeq" id="XP_001610017.1">
    <property type="nucleotide sequence ID" value="XM_001609967.1"/>
</dbReference>
<dbReference type="SMR" id="A7AU38"/>
<dbReference type="FunCoup" id="A7AU38">
    <property type="interactions" value="267"/>
</dbReference>
<dbReference type="STRING" id="5865.A7AU38"/>
<dbReference type="EnsemblProtists" id="EDO06449">
    <property type="protein sequence ID" value="EDO06449"/>
    <property type="gene ID" value="BBOV_II004950"/>
</dbReference>
<dbReference type="GeneID" id="5478247"/>
<dbReference type="KEGG" id="bbo:BBOV_II004950"/>
<dbReference type="VEuPathDB" id="PiroplasmaDB:BBOV_II004950"/>
<dbReference type="eggNOG" id="KOG1355">
    <property type="taxonomic scope" value="Eukaryota"/>
</dbReference>
<dbReference type="InParanoid" id="A7AU38"/>
<dbReference type="OMA" id="FHHAKPI"/>
<dbReference type="UniPathway" id="UPA00075">
    <property type="reaction ID" value="UER00335"/>
</dbReference>
<dbReference type="Proteomes" id="UP000002173">
    <property type="component" value="Unassembled WGS sequence"/>
</dbReference>
<dbReference type="GO" id="GO:0005737">
    <property type="term" value="C:cytoplasm"/>
    <property type="evidence" value="ECO:0007669"/>
    <property type="project" value="UniProtKB-SubCell"/>
</dbReference>
<dbReference type="GO" id="GO:0004019">
    <property type="term" value="F:adenylosuccinate synthase activity"/>
    <property type="evidence" value="ECO:0007669"/>
    <property type="project" value="UniProtKB-UniRule"/>
</dbReference>
<dbReference type="GO" id="GO:0005525">
    <property type="term" value="F:GTP binding"/>
    <property type="evidence" value="ECO:0007669"/>
    <property type="project" value="UniProtKB-UniRule"/>
</dbReference>
<dbReference type="GO" id="GO:0000287">
    <property type="term" value="F:magnesium ion binding"/>
    <property type="evidence" value="ECO:0007669"/>
    <property type="project" value="UniProtKB-UniRule"/>
</dbReference>
<dbReference type="GO" id="GO:0044208">
    <property type="term" value="P:'de novo' AMP biosynthetic process"/>
    <property type="evidence" value="ECO:0007669"/>
    <property type="project" value="UniProtKB-UniRule"/>
</dbReference>
<dbReference type="GO" id="GO:0046040">
    <property type="term" value="P:IMP metabolic process"/>
    <property type="evidence" value="ECO:0007669"/>
    <property type="project" value="TreeGrafter"/>
</dbReference>
<dbReference type="CDD" id="cd03108">
    <property type="entry name" value="AdSS"/>
    <property type="match status" value="1"/>
</dbReference>
<dbReference type="FunFam" id="1.10.300.10:FF:000001">
    <property type="entry name" value="Adenylosuccinate synthetase"/>
    <property type="match status" value="1"/>
</dbReference>
<dbReference type="FunFam" id="3.90.170.10:FF:000001">
    <property type="entry name" value="Adenylosuccinate synthetase"/>
    <property type="match status" value="1"/>
</dbReference>
<dbReference type="Gene3D" id="3.40.440.10">
    <property type="entry name" value="Adenylosuccinate Synthetase, subunit A, domain 1"/>
    <property type="match status" value="1"/>
</dbReference>
<dbReference type="Gene3D" id="1.10.300.10">
    <property type="entry name" value="Adenylosuccinate Synthetase, subunit A, domain 2"/>
    <property type="match status" value="1"/>
</dbReference>
<dbReference type="Gene3D" id="3.90.170.10">
    <property type="entry name" value="Adenylosuccinate Synthetase, subunit A, domain 3"/>
    <property type="match status" value="1"/>
</dbReference>
<dbReference type="HAMAP" id="MF_00011">
    <property type="entry name" value="Adenylosucc_synth"/>
    <property type="match status" value="1"/>
</dbReference>
<dbReference type="InterPro" id="IPR018220">
    <property type="entry name" value="Adenylosuccin_syn_GTP-bd"/>
</dbReference>
<dbReference type="InterPro" id="IPR033128">
    <property type="entry name" value="Adenylosuccin_syn_Lys_AS"/>
</dbReference>
<dbReference type="InterPro" id="IPR042109">
    <property type="entry name" value="Adenylosuccinate_synth_dom1"/>
</dbReference>
<dbReference type="InterPro" id="IPR042110">
    <property type="entry name" value="Adenylosuccinate_synth_dom2"/>
</dbReference>
<dbReference type="InterPro" id="IPR042111">
    <property type="entry name" value="Adenylosuccinate_synth_dom3"/>
</dbReference>
<dbReference type="InterPro" id="IPR001114">
    <property type="entry name" value="Adenylosuccinate_synthetase"/>
</dbReference>
<dbReference type="InterPro" id="IPR027417">
    <property type="entry name" value="P-loop_NTPase"/>
</dbReference>
<dbReference type="NCBIfam" id="NF002223">
    <property type="entry name" value="PRK01117.1"/>
    <property type="match status" value="1"/>
</dbReference>
<dbReference type="NCBIfam" id="TIGR00184">
    <property type="entry name" value="purA"/>
    <property type="match status" value="1"/>
</dbReference>
<dbReference type="PANTHER" id="PTHR11846">
    <property type="entry name" value="ADENYLOSUCCINATE SYNTHETASE"/>
    <property type="match status" value="1"/>
</dbReference>
<dbReference type="PANTHER" id="PTHR11846:SF0">
    <property type="entry name" value="ADENYLOSUCCINATE SYNTHETASE"/>
    <property type="match status" value="1"/>
</dbReference>
<dbReference type="Pfam" id="PF00709">
    <property type="entry name" value="Adenylsucc_synt"/>
    <property type="match status" value="1"/>
</dbReference>
<dbReference type="SMART" id="SM00788">
    <property type="entry name" value="Adenylsucc_synt"/>
    <property type="match status" value="1"/>
</dbReference>
<dbReference type="SUPFAM" id="SSF52540">
    <property type="entry name" value="P-loop containing nucleoside triphosphate hydrolases"/>
    <property type="match status" value="1"/>
</dbReference>
<dbReference type="PROSITE" id="PS01266">
    <property type="entry name" value="ADENYLOSUCCIN_SYN_1"/>
    <property type="match status" value="1"/>
</dbReference>
<dbReference type="PROSITE" id="PS00513">
    <property type="entry name" value="ADENYLOSUCCIN_SYN_2"/>
    <property type="match status" value="1"/>
</dbReference>
<sequence>MEKTSFSHDTNKVFLIAGMQWGDEGKGKAVVTFSEKVDIVAKYNGGHNAGHEIILNGQQYKLHLIPGGVMHPHVINVLGHGMVIHLESLLKEMEILTQHGIEVLERLRISDRAHILLNAHVDIDRKMEHRRMSGGGKIGTTLRGIGPCYSTKSARTGIRMGDLLHWEHFSKKVRDFYKIHCDFENFEELAQEEVENHKKLYDIFAKCICDTGYFMSESIKAGKKILLEGSNGSLLDIDMGTYPFVTSSTTLACGAYLGLGVPLNAPIYRIGILKCYQTRVGMGPFPTEFFDDNYTHIQKDGTEIGVSTARVRRCGWLDLVAARYIQRLNCFNSIYFTKMDVLTGLKEIKICIDYRNKVDGTILERGRFPSTIASLEEYEPVYQSFAGWDQDISQISEYNELPETARKYIEFVEKEVGAHFQWVGVGQDVKSIIVRS</sequence>
<evidence type="ECO:0000250" key="1"/>
<evidence type="ECO:0000255" key="2">
    <source>
        <dbReference type="HAMAP-Rule" id="MF_03125"/>
    </source>
</evidence>
<feature type="chain" id="PRO_0000399289" description="Adenylosuccinate synthetase">
    <location>
        <begin position="1"/>
        <end position="436"/>
    </location>
</feature>
<feature type="active site" description="Proton acceptor" evidence="2">
    <location>
        <position position="23"/>
    </location>
</feature>
<feature type="active site" description="Proton donor" evidence="2">
    <location>
        <position position="51"/>
    </location>
</feature>
<feature type="binding site" evidence="2">
    <location>
        <begin position="22"/>
        <end position="28"/>
    </location>
    <ligand>
        <name>GTP</name>
        <dbReference type="ChEBI" id="CHEBI:37565"/>
    </ligand>
</feature>
<feature type="binding site" description="in other chain" evidence="2">
    <location>
        <begin position="23"/>
        <end position="26"/>
    </location>
    <ligand>
        <name>IMP</name>
        <dbReference type="ChEBI" id="CHEBI:58053"/>
        <note>ligand shared between dimeric partners</note>
    </ligand>
</feature>
<feature type="binding site" evidence="2">
    <location>
        <position position="23"/>
    </location>
    <ligand>
        <name>Mg(2+)</name>
        <dbReference type="ChEBI" id="CHEBI:18420"/>
    </ligand>
</feature>
<feature type="binding site" description="in other chain" evidence="2">
    <location>
        <begin position="48"/>
        <end position="51"/>
    </location>
    <ligand>
        <name>IMP</name>
        <dbReference type="ChEBI" id="CHEBI:58053"/>
        <note>ligand shared between dimeric partners</note>
    </ligand>
</feature>
<feature type="binding site" evidence="2">
    <location>
        <begin position="50"/>
        <end position="52"/>
    </location>
    <ligand>
        <name>GTP</name>
        <dbReference type="ChEBI" id="CHEBI:37565"/>
    </ligand>
</feature>
<feature type="binding site" evidence="2">
    <location>
        <position position="50"/>
    </location>
    <ligand>
        <name>Mg(2+)</name>
        <dbReference type="ChEBI" id="CHEBI:18420"/>
    </ligand>
</feature>
<feature type="binding site" description="in other chain" evidence="2">
    <location>
        <position position="141"/>
    </location>
    <ligand>
        <name>IMP</name>
        <dbReference type="ChEBI" id="CHEBI:58053"/>
        <note>ligand shared between dimeric partners</note>
    </ligand>
</feature>
<feature type="binding site" evidence="2">
    <location>
        <position position="155"/>
    </location>
    <ligand>
        <name>IMP</name>
        <dbReference type="ChEBI" id="CHEBI:58053"/>
        <note>ligand shared between dimeric partners</note>
    </ligand>
</feature>
<feature type="binding site" description="in other chain" evidence="2">
    <location>
        <position position="231"/>
    </location>
    <ligand>
        <name>IMP</name>
        <dbReference type="ChEBI" id="CHEBI:58053"/>
        <note>ligand shared between dimeric partners</note>
    </ligand>
</feature>
<feature type="binding site" description="in other chain" evidence="2">
    <location>
        <position position="246"/>
    </location>
    <ligand>
        <name>IMP</name>
        <dbReference type="ChEBI" id="CHEBI:58053"/>
        <note>ligand shared between dimeric partners</note>
    </ligand>
</feature>
<feature type="binding site" evidence="2">
    <location>
        <begin position="306"/>
        <end position="312"/>
    </location>
    <ligand>
        <name>substrate</name>
    </ligand>
</feature>
<feature type="binding site" description="in other chain" evidence="2">
    <location>
        <position position="310"/>
    </location>
    <ligand>
        <name>IMP</name>
        <dbReference type="ChEBI" id="CHEBI:58053"/>
        <note>ligand shared between dimeric partners</note>
    </ligand>
</feature>
<feature type="binding site" evidence="2">
    <location>
        <position position="312"/>
    </location>
    <ligand>
        <name>GTP</name>
        <dbReference type="ChEBI" id="CHEBI:37565"/>
    </ligand>
</feature>
<feature type="binding site" evidence="2">
    <location>
        <begin position="338"/>
        <end position="340"/>
    </location>
    <ligand>
        <name>GTP</name>
        <dbReference type="ChEBI" id="CHEBI:37565"/>
    </ligand>
</feature>
<feature type="binding site" evidence="2">
    <location>
        <begin position="424"/>
        <end position="426"/>
    </location>
    <ligand>
        <name>GTP</name>
        <dbReference type="ChEBI" id="CHEBI:37565"/>
    </ligand>
</feature>
<organism>
    <name type="scientific">Babesia bovis</name>
    <dbReference type="NCBI Taxonomy" id="5865"/>
    <lineage>
        <taxon>Eukaryota</taxon>
        <taxon>Sar</taxon>
        <taxon>Alveolata</taxon>
        <taxon>Apicomplexa</taxon>
        <taxon>Aconoidasida</taxon>
        <taxon>Piroplasmida</taxon>
        <taxon>Babesiidae</taxon>
        <taxon>Babesia</taxon>
    </lineage>
</organism>
<protein>
    <recommendedName>
        <fullName evidence="2">Adenylosuccinate synthetase</fullName>
        <shortName evidence="2">AMPSase</shortName>
        <shortName evidence="2">AdSS</shortName>
        <ecNumber evidence="2">6.3.4.4</ecNumber>
    </recommendedName>
    <alternativeName>
        <fullName evidence="2">IMP--aspartate ligase</fullName>
    </alternativeName>
</protein>
<comment type="function">
    <text evidence="1">Plays an important role in the salvage pathway for purine nucleotide biosynthesis. Catalyzes the first committed step in the biosynthesis of AMP from IMP (By similarity).</text>
</comment>
<comment type="catalytic activity">
    <reaction evidence="2">
        <text>IMP + L-aspartate + GTP = N(6)-(1,2-dicarboxyethyl)-AMP + GDP + phosphate + 2 H(+)</text>
        <dbReference type="Rhea" id="RHEA:15753"/>
        <dbReference type="ChEBI" id="CHEBI:15378"/>
        <dbReference type="ChEBI" id="CHEBI:29991"/>
        <dbReference type="ChEBI" id="CHEBI:37565"/>
        <dbReference type="ChEBI" id="CHEBI:43474"/>
        <dbReference type="ChEBI" id="CHEBI:57567"/>
        <dbReference type="ChEBI" id="CHEBI:58053"/>
        <dbReference type="ChEBI" id="CHEBI:58189"/>
        <dbReference type="EC" id="6.3.4.4"/>
    </reaction>
</comment>
<comment type="cofactor">
    <cofactor evidence="2">
        <name>Mg(2+)</name>
        <dbReference type="ChEBI" id="CHEBI:18420"/>
    </cofactor>
    <text evidence="2">Binds 1 Mg(2+) ion per subunit.</text>
</comment>
<comment type="pathway">
    <text evidence="2">Purine metabolism; AMP biosynthesis via de novo pathway; AMP from IMP: step 1/2.</text>
</comment>
<comment type="subunit">
    <text evidence="2">Homodimer.</text>
</comment>
<comment type="subcellular location">
    <subcellularLocation>
        <location evidence="2">Cytoplasm</location>
    </subcellularLocation>
</comment>
<comment type="miscellaneous">
    <text>Parasitic protozoa lack the de novo purine biosynthesis pathway and rely exclusively on the salvage pathway for their purine nucleotide requirements.</text>
</comment>
<comment type="similarity">
    <text evidence="2">Belongs to the adenylosuccinate synthetase family.</text>
</comment>
<gene>
    <name type="ORF">BBOV_II004950</name>
</gene>
<name>PURA_BABBO</name>
<accession>A7AU38</accession>